<feature type="chain" id="PRO_1000120610" description="Small ribosomal subunit protein bS21">
    <location>
        <begin position="1"/>
        <end position="56"/>
    </location>
</feature>
<organism>
    <name type="scientific">Dictyoglomus thermophilum (strain ATCC 35947 / DSM 3960 / H-6-12)</name>
    <dbReference type="NCBI Taxonomy" id="309799"/>
    <lineage>
        <taxon>Bacteria</taxon>
        <taxon>Pseudomonadati</taxon>
        <taxon>Dictyoglomota</taxon>
        <taxon>Dictyoglomia</taxon>
        <taxon>Dictyoglomales</taxon>
        <taxon>Dictyoglomaceae</taxon>
        <taxon>Dictyoglomus</taxon>
    </lineage>
</organism>
<dbReference type="EMBL" id="CP001146">
    <property type="protein sequence ID" value="ACI18765.1"/>
    <property type="molecule type" value="Genomic_DNA"/>
</dbReference>
<dbReference type="RefSeq" id="WP_012547397.1">
    <property type="nucleotide sequence ID" value="NC_011297.1"/>
</dbReference>
<dbReference type="SMR" id="B5YET6"/>
<dbReference type="STRING" id="309799.DICTH_1215"/>
<dbReference type="PaxDb" id="309799-DICTH_1215"/>
<dbReference type="KEGG" id="dth:DICTH_1215"/>
<dbReference type="eggNOG" id="COG0828">
    <property type="taxonomic scope" value="Bacteria"/>
</dbReference>
<dbReference type="HOGENOM" id="CLU_159258_3_1_0"/>
<dbReference type="OrthoDB" id="9799244at2"/>
<dbReference type="Proteomes" id="UP000001733">
    <property type="component" value="Chromosome"/>
</dbReference>
<dbReference type="GO" id="GO:1990904">
    <property type="term" value="C:ribonucleoprotein complex"/>
    <property type="evidence" value="ECO:0007669"/>
    <property type="project" value="UniProtKB-KW"/>
</dbReference>
<dbReference type="GO" id="GO:0005840">
    <property type="term" value="C:ribosome"/>
    <property type="evidence" value="ECO:0007669"/>
    <property type="project" value="UniProtKB-KW"/>
</dbReference>
<dbReference type="GO" id="GO:0003735">
    <property type="term" value="F:structural constituent of ribosome"/>
    <property type="evidence" value="ECO:0007669"/>
    <property type="project" value="InterPro"/>
</dbReference>
<dbReference type="GO" id="GO:0006412">
    <property type="term" value="P:translation"/>
    <property type="evidence" value="ECO:0007669"/>
    <property type="project" value="UniProtKB-UniRule"/>
</dbReference>
<dbReference type="Gene3D" id="1.20.5.1150">
    <property type="entry name" value="Ribosomal protein S8"/>
    <property type="match status" value="1"/>
</dbReference>
<dbReference type="HAMAP" id="MF_00358">
    <property type="entry name" value="Ribosomal_bS21"/>
    <property type="match status" value="1"/>
</dbReference>
<dbReference type="InterPro" id="IPR001911">
    <property type="entry name" value="Ribosomal_bS21"/>
</dbReference>
<dbReference type="InterPro" id="IPR038380">
    <property type="entry name" value="Ribosomal_bS21_sf"/>
</dbReference>
<dbReference type="NCBIfam" id="TIGR00030">
    <property type="entry name" value="S21p"/>
    <property type="match status" value="1"/>
</dbReference>
<dbReference type="PANTHER" id="PTHR21109">
    <property type="entry name" value="MITOCHONDRIAL 28S RIBOSOMAL PROTEIN S21"/>
    <property type="match status" value="1"/>
</dbReference>
<dbReference type="PANTHER" id="PTHR21109:SF22">
    <property type="entry name" value="SMALL RIBOSOMAL SUBUNIT PROTEIN BS21"/>
    <property type="match status" value="1"/>
</dbReference>
<dbReference type="Pfam" id="PF01165">
    <property type="entry name" value="Ribosomal_S21"/>
    <property type="match status" value="1"/>
</dbReference>
<dbReference type="PRINTS" id="PR00976">
    <property type="entry name" value="RIBOSOMALS21"/>
</dbReference>
<proteinExistence type="inferred from homology"/>
<keyword id="KW-0687">Ribonucleoprotein</keyword>
<keyword id="KW-0689">Ribosomal protein</keyword>
<comment type="similarity">
    <text evidence="1">Belongs to the bacterial ribosomal protein bS21 family.</text>
</comment>
<gene>
    <name evidence="1" type="primary">rpsU</name>
    <name type="ordered locus">DICTH_1215</name>
</gene>
<reference key="1">
    <citation type="journal article" date="2014" name="Genome Announc.">
        <title>Complete Genome Sequence of the Extreme Thermophile Dictyoglomus thermophilum H-6-12.</title>
        <authorList>
            <person name="Coil D.A."/>
            <person name="Badger J.H."/>
            <person name="Forberger H.C."/>
            <person name="Riggs F."/>
            <person name="Madupu R."/>
            <person name="Fedorova N."/>
            <person name="Ward N."/>
            <person name="Robb F.T."/>
            <person name="Eisen J.A."/>
        </authorList>
    </citation>
    <scope>NUCLEOTIDE SEQUENCE [LARGE SCALE GENOMIC DNA]</scope>
    <source>
        <strain>ATCC 35947 / DSM 3960 / H-6-12</strain>
    </source>
</reference>
<protein>
    <recommendedName>
        <fullName evidence="1">Small ribosomal subunit protein bS21</fullName>
    </recommendedName>
    <alternativeName>
        <fullName evidence="2">30S ribosomal protein S21</fullName>
    </alternativeName>
</protein>
<name>RS21_DICT6</name>
<evidence type="ECO:0000255" key="1">
    <source>
        <dbReference type="HAMAP-Rule" id="MF_00358"/>
    </source>
</evidence>
<evidence type="ECO:0000305" key="2"/>
<sequence>MTEVRVGKDESLDSALKRFKKKLQEDGVLADIRRHEYYEKPSEKRNRKKAQSKKKK</sequence>
<accession>B5YET6</accession>